<reference key="1">
    <citation type="journal article" date="2003" name="Nucleic Acids Res.">
        <title>The complete genome sequence and analysis of Corynebacterium diphtheriae NCTC13129.</title>
        <authorList>
            <person name="Cerdeno-Tarraga A.-M."/>
            <person name="Efstratiou A."/>
            <person name="Dover L.G."/>
            <person name="Holden M.T.G."/>
            <person name="Pallen M.J."/>
            <person name="Bentley S.D."/>
            <person name="Besra G.S."/>
            <person name="Churcher C.M."/>
            <person name="James K.D."/>
            <person name="De Zoysa A."/>
            <person name="Chillingworth T."/>
            <person name="Cronin A."/>
            <person name="Dowd L."/>
            <person name="Feltwell T."/>
            <person name="Hamlin N."/>
            <person name="Holroyd S."/>
            <person name="Jagels K."/>
            <person name="Moule S."/>
            <person name="Quail M.A."/>
            <person name="Rabbinowitsch E."/>
            <person name="Rutherford K.M."/>
            <person name="Thomson N.R."/>
            <person name="Unwin L."/>
            <person name="Whitehead S."/>
            <person name="Barrell B.G."/>
            <person name="Parkhill J."/>
        </authorList>
    </citation>
    <scope>NUCLEOTIDE SEQUENCE [LARGE SCALE GENOMIC DNA]</scope>
    <source>
        <strain>ATCC 700971 / NCTC 13129 / Biotype gravis</strain>
    </source>
</reference>
<protein>
    <recommendedName>
        <fullName evidence="1">Pyridoxal kinase PdxY</fullName>
        <shortName evidence="1">PL kinase</shortName>
        <ecNumber evidence="1">2.7.1.35</ecNumber>
    </recommendedName>
</protein>
<name>PDXY_CORDI</name>
<sequence>MNILSIQSHVSYGHVGNSAAVFPLQRIGHEVWPVHTVNFSNHTGYGQWGGELIPAAQVRNVIDGMEQRGAFERIDAILSGYQGGSDIADVIVDAVARIKEANPQAVYACDPVMGNAKSGCFVSDLIPPLLRDKVVPVADIITPNQFELEYLTGVPAHDTTSTLEAIAAAQEMGPNTVLVTSVRRPETPADAIEMIAANEQGAWLVRTPFIDFKRNGSGDVTAALFTGHYIRERDAADALARTASSVFDLIETTFTADSRELLIIESQEAIAHPRLQFEVEQIA</sequence>
<evidence type="ECO:0000255" key="1">
    <source>
        <dbReference type="HAMAP-Rule" id="MF_01639"/>
    </source>
</evidence>
<evidence type="ECO:0000305" key="2"/>
<gene>
    <name evidence="1" type="primary">pdxY</name>
    <name type="ordered locus">DIP1715</name>
</gene>
<proteinExistence type="inferred from homology"/>
<comment type="function">
    <text evidence="1">Pyridoxal kinase involved in the salvage pathway of pyridoxal 5'-phosphate (PLP). Catalyzes the phosphorylation of pyridoxal to PLP.</text>
</comment>
<comment type="catalytic activity">
    <reaction evidence="1">
        <text>pyridoxal + ATP = pyridoxal 5'-phosphate + ADP + H(+)</text>
        <dbReference type="Rhea" id="RHEA:10224"/>
        <dbReference type="ChEBI" id="CHEBI:15378"/>
        <dbReference type="ChEBI" id="CHEBI:17310"/>
        <dbReference type="ChEBI" id="CHEBI:30616"/>
        <dbReference type="ChEBI" id="CHEBI:456216"/>
        <dbReference type="ChEBI" id="CHEBI:597326"/>
        <dbReference type="EC" id="2.7.1.35"/>
    </reaction>
</comment>
<comment type="cofactor">
    <cofactor evidence="1">
        <name>Mg(2+)</name>
        <dbReference type="ChEBI" id="CHEBI:18420"/>
    </cofactor>
</comment>
<comment type="pathway">
    <text evidence="1">Cofactor metabolism; pyridoxal 5'-phosphate salvage; pyridoxal 5'-phosphate from pyridoxal: step 1/1.</text>
</comment>
<comment type="subunit">
    <text evidence="1">Homodimer.</text>
</comment>
<comment type="similarity">
    <text evidence="1">Belongs to the pyridoxine kinase family. PdxY subfamily.</text>
</comment>
<comment type="sequence caution" evidence="2">
    <conflict type="erroneous initiation">
        <sequence resource="EMBL-CDS" id="CAE50244"/>
    </conflict>
</comment>
<feature type="chain" id="PRO_0000269803" description="Pyridoxal kinase PdxY">
    <location>
        <begin position="1"/>
        <end position="283"/>
    </location>
</feature>
<feature type="binding site" evidence="1">
    <location>
        <position position="8"/>
    </location>
    <ligand>
        <name>substrate</name>
    </ligand>
</feature>
<feature type="binding site" evidence="1">
    <location>
        <position position="110"/>
    </location>
    <ligand>
        <name>ATP</name>
        <dbReference type="ChEBI" id="CHEBI:30616"/>
    </ligand>
</feature>
<feature type="binding site" evidence="1">
    <location>
        <position position="147"/>
    </location>
    <ligand>
        <name>ATP</name>
        <dbReference type="ChEBI" id="CHEBI:30616"/>
    </ligand>
</feature>
<feature type="binding site" evidence="1">
    <location>
        <position position="219"/>
    </location>
    <ligand>
        <name>substrate</name>
    </ligand>
</feature>
<keyword id="KW-0067">ATP-binding</keyword>
<keyword id="KW-0418">Kinase</keyword>
<keyword id="KW-0460">Magnesium</keyword>
<keyword id="KW-0547">Nucleotide-binding</keyword>
<keyword id="KW-1185">Reference proteome</keyword>
<keyword id="KW-0808">Transferase</keyword>
<organism>
    <name type="scientific">Corynebacterium diphtheriae (strain ATCC 700971 / NCTC 13129 / Biotype gravis)</name>
    <dbReference type="NCBI Taxonomy" id="257309"/>
    <lineage>
        <taxon>Bacteria</taxon>
        <taxon>Bacillati</taxon>
        <taxon>Actinomycetota</taxon>
        <taxon>Actinomycetes</taxon>
        <taxon>Mycobacteriales</taxon>
        <taxon>Corynebacteriaceae</taxon>
        <taxon>Corynebacterium</taxon>
    </lineage>
</organism>
<dbReference type="EC" id="2.7.1.35" evidence="1"/>
<dbReference type="EMBL" id="BX248359">
    <property type="protein sequence ID" value="CAE50244.1"/>
    <property type="status" value="ALT_INIT"/>
    <property type="molecule type" value="Genomic_DNA"/>
</dbReference>
<dbReference type="RefSeq" id="WP_041627951.1">
    <property type="nucleotide sequence ID" value="NC_002935.2"/>
</dbReference>
<dbReference type="SMR" id="Q6NG19"/>
<dbReference type="STRING" id="257309.DIP1715"/>
<dbReference type="KEGG" id="cdi:DIP1715"/>
<dbReference type="HOGENOM" id="CLU_046496_3_1_11"/>
<dbReference type="UniPathway" id="UPA01068">
    <property type="reaction ID" value="UER00298"/>
</dbReference>
<dbReference type="Proteomes" id="UP000002198">
    <property type="component" value="Chromosome"/>
</dbReference>
<dbReference type="GO" id="GO:0005829">
    <property type="term" value="C:cytosol"/>
    <property type="evidence" value="ECO:0007669"/>
    <property type="project" value="TreeGrafter"/>
</dbReference>
<dbReference type="GO" id="GO:0005524">
    <property type="term" value="F:ATP binding"/>
    <property type="evidence" value="ECO:0007669"/>
    <property type="project" value="UniProtKB-UniRule"/>
</dbReference>
<dbReference type="GO" id="GO:0000287">
    <property type="term" value="F:magnesium ion binding"/>
    <property type="evidence" value="ECO:0007669"/>
    <property type="project" value="UniProtKB-UniRule"/>
</dbReference>
<dbReference type="GO" id="GO:0008478">
    <property type="term" value="F:pyridoxal kinase activity"/>
    <property type="evidence" value="ECO:0007669"/>
    <property type="project" value="UniProtKB-UniRule"/>
</dbReference>
<dbReference type="GO" id="GO:0009443">
    <property type="term" value="P:pyridoxal 5'-phosphate salvage"/>
    <property type="evidence" value="ECO:0007669"/>
    <property type="project" value="UniProtKB-UniRule"/>
</dbReference>
<dbReference type="CDD" id="cd01173">
    <property type="entry name" value="pyridoxal_pyridoxamine_kinase"/>
    <property type="match status" value="1"/>
</dbReference>
<dbReference type="Gene3D" id="3.40.1190.20">
    <property type="match status" value="1"/>
</dbReference>
<dbReference type="HAMAP" id="MF_01639">
    <property type="entry name" value="PdxY"/>
    <property type="match status" value="1"/>
</dbReference>
<dbReference type="InterPro" id="IPR013749">
    <property type="entry name" value="PM/HMP-P_kinase-1"/>
</dbReference>
<dbReference type="InterPro" id="IPR004625">
    <property type="entry name" value="PyrdxlKinase"/>
</dbReference>
<dbReference type="InterPro" id="IPR023685">
    <property type="entry name" value="Pyridoxal_kinase_PdxY"/>
</dbReference>
<dbReference type="InterPro" id="IPR029056">
    <property type="entry name" value="Ribokinase-like"/>
</dbReference>
<dbReference type="NCBIfam" id="NF004398">
    <property type="entry name" value="PRK05756.1"/>
    <property type="match status" value="1"/>
</dbReference>
<dbReference type="NCBIfam" id="TIGR00687">
    <property type="entry name" value="pyridox_kin"/>
    <property type="match status" value="1"/>
</dbReference>
<dbReference type="PANTHER" id="PTHR10534">
    <property type="entry name" value="PYRIDOXAL KINASE"/>
    <property type="match status" value="1"/>
</dbReference>
<dbReference type="PANTHER" id="PTHR10534:SF2">
    <property type="entry name" value="PYRIDOXAL KINASE"/>
    <property type="match status" value="1"/>
</dbReference>
<dbReference type="Pfam" id="PF08543">
    <property type="entry name" value="Phos_pyr_kin"/>
    <property type="match status" value="1"/>
</dbReference>
<dbReference type="SUPFAM" id="SSF53613">
    <property type="entry name" value="Ribokinase-like"/>
    <property type="match status" value="1"/>
</dbReference>
<accession>Q6NG19</accession>